<protein>
    <recommendedName>
        <fullName>Histone H4</fullName>
    </recommendedName>
</protein>
<evidence type="ECO:0000250" key="1"/>
<evidence type="ECO:0000250" key="2">
    <source>
        <dbReference type="UniProtKB" id="P62805"/>
    </source>
</evidence>
<evidence type="ECO:0000256" key="3">
    <source>
        <dbReference type="SAM" id="MobiDB-lite"/>
    </source>
</evidence>
<evidence type="ECO:0000305" key="4"/>
<sequence length="103" mass="11385">MSGRGKGGKGLGKGGAKRHRKVLRDNIQGITKPAIRRLARRGGVKRISGLIYEETRGVLKVFLENVIRDAVTYCEHAKRKTVTSMDVVYALKRQGRTLYGFGG</sequence>
<reference key="1">
    <citation type="submission" date="1990-07" db="EMBL/GenBank/DDBJ databases">
        <authorList>
            <person name="Wu Y."/>
            <person name="Kowbel D."/>
            <person name="Smith M.J."/>
        </authorList>
    </citation>
    <scope>NUCLEOTIDE SEQUENCE [GENOMIC DNA]</scope>
</reference>
<name>H4_SOLST</name>
<accession>P27996</accession>
<feature type="initiator methionine" description="Removed">
    <location>
        <position position="1"/>
    </location>
</feature>
<feature type="chain" id="PRO_0000158361" description="Histone H4">
    <location>
        <begin position="2"/>
        <end position="103"/>
    </location>
</feature>
<feature type="DNA-binding region">
    <location>
        <begin position="17"/>
        <end position="21"/>
    </location>
</feature>
<feature type="region of interest" description="Disordered" evidence="3">
    <location>
        <begin position="1"/>
        <end position="20"/>
    </location>
</feature>
<feature type="compositionally biased region" description="Gly residues" evidence="3">
    <location>
        <begin position="1"/>
        <end position="14"/>
    </location>
</feature>
<feature type="modified residue" description="N-acetylserine" evidence="1">
    <location>
        <position position="2"/>
    </location>
</feature>
<feature type="modified residue" description="N6-acetyl-N6-methyllysine; alternate" evidence="2">
    <location>
        <position position="6"/>
    </location>
</feature>
<feature type="modified residue" description="N6-acetyl-N6-methyllysine; alternate" evidence="2">
    <location>
        <position position="13"/>
    </location>
</feature>
<feature type="modified residue" description="N6-methyllysine" evidence="1">
    <location>
        <position position="21"/>
    </location>
</feature>
<dbReference type="EMBL" id="X54115">
    <property type="protein sequence ID" value="CAA38055.1"/>
    <property type="molecule type" value="Genomic_DNA"/>
</dbReference>
<dbReference type="PIR" id="S20677">
    <property type="entry name" value="S20677"/>
</dbReference>
<dbReference type="SMR" id="P27996"/>
<dbReference type="GO" id="GO:0000786">
    <property type="term" value="C:nucleosome"/>
    <property type="evidence" value="ECO:0007669"/>
    <property type="project" value="UniProtKB-KW"/>
</dbReference>
<dbReference type="GO" id="GO:0005634">
    <property type="term" value="C:nucleus"/>
    <property type="evidence" value="ECO:0007669"/>
    <property type="project" value="UniProtKB-SubCell"/>
</dbReference>
<dbReference type="GO" id="GO:0003677">
    <property type="term" value="F:DNA binding"/>
    <property type="evidence" value="ECO:0007669"/>
    <property type="project" value="UniProtKB-KW"/>
</dbReference>
<dbReference type="GO" id="GO:0046982">
    <property type="term" value="F:protein heterodimerization activity"/>
    <property type="evidence" value="ECO:0007669"/>
    <property type="project" value="InterPro"/>
</dbReference>
<dbReference type="GO" id="GO:0030527">
    <property type="term" value="F:structural constituent of chromatin"/>
    <property type="evidence" value="ECO:0007669"/>
    <property type="project" value="InterPro"/>
</dbReference>
<dbReference type="CDD" id="cd22912">
    <property type="entry name" value="HFD_H4"/>
    <property type="match status" value="1"/>
</dbReference>
<dbReference type="FunFam" id="1.10.20.10:FF:000002">
    <property type="entry name" value="Histone H4"/>
    <property type="match status" value="1"/>
</dbReference>
<dbReference type="Gene3D" id="1.10.20.10">
    <property type="entry name" value="Histone, subunit A"/>
    <property type="match status" value="1"/>
</dbReference>
<dbReference type="InterPro" id="IPR035425">
    <property type="entry name" value="CENP-T/H4_C"/>
</dbReference>
<dbReference type="InterPro" id="IPR009072">
    <property type="entry name" value="Histone-fold"/>
</dbReference>
<dbReference type="InterPro" id="IPR001951">
    <property type="entry name" value="Histone_H4"/>
</dbReference>
<dbReference type="InterPro" id="IPR019809">
    <property type="entry name" value="Histone_H4_CS"/>
</dbReference>
<dbReference type="PANTHER" id="PTHR10484">
    <property type="entry name" value="HISTONE H4"/>
    <property type="match status" value="1"/>
</dbReference>
<dbReference type="Pfam" id="PF15511">
    <property type="entry name" value="CENP-T_C"/>
    <property type="match status" value="1"/>
</dbReference>
<dbReference type="PRINTS" id="PR00623">
    <property type="entry name" value="HISTONEH4"/>
</dbReference>
<dbReference type="SMART" id="SM00417">
    <property type="entry name" value="H4"/>
    <property type="match status" value="1"/>
</dbReference>
<dbReference type="SUPFAM" id="SSF47113">
    <property type="entry name" value="Histone-fold"/>
    <property type="match status" value="1"/>
</dbReference>
<dbReference type="PROSITE" id="PS00047">
    <property type="entry name" value="HISTONE_H4"/>
    <property type="match status" value="1"/>
</dbReference>
<keyword id="KW-0007">Acetylation</keyword>
<keyword id="KW-0158">Chromosome</keyword>
<keyword id="KW-0238">DNA-binding</keyword>
<keyword id="KW-0488">Methylation</keyword>
<keyword id="KW-0544">Nucleosome core</keyword>
<keyword id="KW-0539">Nucleus</keyword>
<proteinExistence type="inferred from homology"/>
<comment type="function">
    <text>Core component of nucleosome. Nucleosomes wrap and compact DNA into chromatin, limiting DNA accessibility to the cellular machineries which require DNA as a template. Histones thereby play a central role in transcription regulation, DNA repair, DNA replication and chromosomal stability. DNA accessibility is regulated via a complex set of post-translational modifications of histones, also called histone code, and nucleosome remodeling.</text>
</comment>
<comment type="subunit">
    <text>The nucleosome is a histone octamer containing two molecules each of H2A, H2B, H3 and H4 assembled in one H3-H4 heterotetramer and two H2A-H2B heterodimers. The octamer wraps approximately 147 bp of DNA.</text>
</comment>
<comment type="subcellular location">
    <subcellularLocation>
        <location evidence="1">Nucleus</location>
    </subcellularLocation>
    <subcellularLocation>
        <location evidence="1">Chromosome</location>
    </subcellularLocation>
</comment>
<comment type="similarity">
    <text evidence="4">Belongs to the histone H4 family.</text>
</comment>
<organism>
    <name type="scientific">Solaster stimpsoni</name>
    <name type="common">Striped sun sea star</name>
    <dbReference type="NCBI Taxonomy" id="7598"/>
    <lineage>
        <taxon>Eukaryota</taxon>
        <taxon>Metazoa</taxon>
        <taxon>Echinodermata</taxon>
        <taxon>Eleutherozoa</taxon>
        <taxon>Asterozoa</taxon>
        <taxon>Asteroidea</taxon>
        <taxon>Spinulosacea</taxon>
        <taxon>Velatida</taxon>
        <taxon>Solasteridae</taxon>
        <taxon>Solaster</taxon>
    </lineage>
</organism>